<name>SCNM1_MOUSE</name>
<gene>
    <name type="primary">Scnm1</name>
    <name type="synonym">Scnm1-ps</name>
</gene>
<evidence type="ECO:0000250" key="1">
    <source>
        <dbReference type="UniProtKB" id="Q9BWG6"/>
    </source>
</evidence>
<evidence type="ECO:0000255" key="2"/>
<evidence type="ECO:0000256" key="3">
    <source>
        <dbReference type="SAM" id="MobiDB-lite"/>
    </source>
</evidence>
<evidence type="ECO:0000269" key="4">
    <source>
    </source>
</evidence>
<evidence type="ECO:0000269" key="5">
    <source>
    </source>
</evidence>
<evidence type="ECO:0000305" key="6"/>
<evidence type="ECO:0007744" key="7">
    <source>
    </source>
</evidence>
<keyword id="KW-0025">Alternative splicing</keyword>
<keyword id="KW-1017">Isopeptide bond</keyword>
<keyword id="KW-0479">Metal-binding</keyword>
<keyword id="KW-0507">mRNA processing</keyword>
<keyword id="KW-0508">mRNA splicing</keyword>
<keyword id="KW-0539">Nucleus</keyword>
<keyword id="KW-0597">Phosphoprotein</keyword>
<keyword id="KW-1185">Reference proteome</keyword>
<keyword id="KW-0747">Spliceosome</keyword>
<keyword id="KW-0832">Ubl conjugation</keyword>
<keyword id="KW-0862">Zinc</keyword>
<keyword id="KW-0863">Zinc-finger</keyword>
<feature type="chain" id="PRO_0000259636" description="Sodium channel modifier 1">
    <location>
        <begin position="1"/>
        <end position="229"/>
    </location>
</feature>
<feature type="zinc finger region" description="Matrin-type">
    <location>
        <begin position="42"/>
        <end position="74"/>
    </location>
</feature>
<feature type="region of interest" description="Disordered" evidence="3">
    <location>
        <begin position="80"/>
        <end position="105"/>
    </location>
</feature>
<feature type="region of interest" description="Disordered" evidence="3">
    <location>
        <begin position="128"/>
        <end position="187"/>
    </location>
</feature>
<feature type="region of interest" description="Required for interaction with LUC7L2" evidence="5">
    <location>
        <begin position="187"/>
        <end position="229"/>
    </location>
</feature>
<feature type="short sequence motif" description="Bipartite nuclear localization signal" evidence="2">
    <location>
        <begin position="4"/>
        <end position="20"/>
    </location>
</feature>
<feature type="compositionally biased region" description="Polar residues" evidence="3">
    <location>
        <begin position="82"/>
        <end position="92"/>
    </location>
</feature>
<feature type="compositionally biased region" description="Basic and acidic residues" evidence="3">
    <location>
        <begin position="157"/>
        <end position="171"/>
    </location>
</feature>
<feature type="modified residue" description="Phosphoserine" evidence="1">
    <location>
        <position position="2"/>
    </location>
</feature>
<feature type="modified residue" description="Phosphoserine" evidence="7">
    <location>
        <position position="182"/>
    </location>
</feature>
<feature type="modified residue" description="Phosphoserine" evidence="1">
    <location>
        <position position="218"/>
    </location>
</feature>
<feature type="cross-link" description="Glycyl lysine isopeptide (Lys-Gly) (interchain with G-Cter in SUMO2)" evidence="1">
    <location>
        <position position="67"/>
    </location>
</feature>
<feature type="splice variant" id="VSP_021490" description="In isoform 3." evidence="6">
    <location>
        <begin position="132"/>
        <end position="196"/>
    </location>
</feature>
<feature type="sequence variant" description="In allele R187X.">
    <location>
        <begin position="187"/>
        <end position="229"/>
    </location>
</feature>
<proteinExistence type="evidence at protein level"/>
<reference key="1">
    <citation type="journal article" date="2007" name="Hum. Mol. Genet.">
        <title>Evidence for a direct role of the disease modifier SCNM1 in splicing.</title>
        <authorList>
            <person name="Howell V.M."/>
            <person name="Jones J.M."/>
            <person name="Bergren S.K."/>
            <person name="Li L."/>
            <person name="Billi A.C."/>
            <person name="Avenarius M.R."/>
            <person name="Meisler M.H."/>
        </authorList>
    </citation>
    <scope>NUCLEOTIDE SEQUENCE [MRNA] (ISOFORM 1)</scope>
    <scope>FUNCTION</scope>
    <scope>SUBCELLULAR LOCATION</scope>
    <scope>INTERACTION WITH LUC7L2 AND SNRNP70</scope>
    <source>
        <strain>C3Heb/FeJ</strain>
        <tissue>Brain</tissue>
    </source>
</reference>
<reference key="2">
    <citation type="journal article" date="2005" name="Science">
        <title>The transcriptional landscape of the mammalian genome.</title>
        <authorList>
            <person name="Carninci P."/>
            <person name="Kasukawa T."/>
            <person name="Katayama S."/>
            <person name="Gough J."/>
            <person name="Frith M.C."/>
            <person name="Maeda N."/>
            <person name="Oyama R."/>
            <person name="Ravasi T."/>
            <person name="Lenhard B."/>
            <person name="Wells C."/>
            <person name="Kodzius R."/>
            <person name="Shimokawa K."/>
            <person name="Bajic V.B."/>
            <person name="Brenner S.E."/>
            <person name="Batalov S."/>
            <person name="Forrest A.R."/>
            <person name="Zavolan M."/>
            <person name="Davis M.J."/>
            <person name="Wilming L.G."/>
            <person name="Aidinis V."/>
            <person name="Allen J.E."/>
            <person name="Ambesi-Impiombato A."/>
            <person name="Apweiler R."/>
            <person name="Aturaliya R.N."/>
            <person name="Bailey T.L."/>
            <person name="Bansal M."/>
            <person name="Baxter L."/>
            <person name="Beisel K.W."/>
            <person name="Bersano T."/>
            <person name="Bono H."/>
            <person name="Chalk A.M."/>
            <person name="Chiu K.P."/>
            <person name="Choudhary V."/>
            <person name="Christoffels A."/>
            <person name="Clutterbuck D.R."/>
            <person name="Crowe M.L."/>
            <person name="Dalla E."/>
            <person name="Dalrymple B.P."/>
            <person name="de Bono B."/>
            <person name="Della Gatta G."/>
            <person name="di Bernardo D."/>
            <person name="Down T."/>
            <person name="Engstrom P."/>
            <person name="Fagiolini M."/>
            <person name="Faulkner G."/>
            <person name="Fletcher C.F."/>
            <person name="Fukushima T."/>
            <person name="Furuno M."/>
            <person name="Futaki S."/>
            <person name="Gariboldi M."/>
            <person name="Georgii-Hemming P."/>
            <person name="Gingeras T.R."/>
            <person name="Gojobori T."/>
            <person name="Green R.E."/>
            <person name="Gustincich S."/>
            <person name="Harbers M."/>
            <person name="Hayashi Y."/>
            <person name="Hensch T.K."/>
            <person name="Hirokawa N."/>
            <person name="Hill D."/>
            <person name="Huminiecki L."/>
            <person name="Iacono M."/>
            <person name="Ikeo K."/>
            <person name="Iwama A."/>
            <person name="Ishikawa T."/>
            <person name="Jakt M."/>
            <person name="Kanapin A."/>
            <person name="Katoh M."/>
            <person name="Kawasawa Y."/>
            <person name="Kelso J."/>
            <person name="Kitamura H."/>
            <person name="Kitano H."/>
            <person name="Kollias G."/>
            <person name="Krishnan S.P."/>
            <person name="Kruger A."/>
            <person name="Kummerfeld S.K."/>
            <person name="Kurochkin I.V."/>
            <person name="Lareau L.F."/>
            <person name="Lazarevic D."/>
            <person name="Lipovich L."/>
            <person name="Liu J."/>
            <person name="Liuni S."/>
            <person name="McWilliam S."/>
            <person name="Madan Babu M."/>
            <person name="Madera M."/>
            <person name="Marchionni L."/>
            <person name="Matsuda H."/>
            <person name="Matsuzawa S."/>
            <person name="Miki H."/>
            <person name="Mignone F."/>
            <person name="Miyake S."/>
            <person name="Morris K."/>
            <person name="Mottagui-Tabar S."/>
            <person name="Mulder N."/>
            <person name="Nakano N."/>
            <person name="Nakauchi H."/>
            <person name="Ng P."/>
            <person name="Nilsson R."/>
            <person name="Nishiguchi S."/>
            <person name="Nishikawa S."/>
            <person name="Nori F."/>
            <person name="Ohara O."/>
            <person name="Okazaki Y."/>
            <person name="Orlando V."/>
            <person name="Pang K.C."/>
            <person name="Pavan W.J."/>
            <person name="Pavesi G."/>
            <person name="Pesole G."/>
            <person name="Petrovsky N."/>
            <person name="Piazza S."/>
            <person name="Reed J."/>
            <person name="Reid J.F."/>
            <person name="Ring B.Z."/>
            <person name="Ringwald M."/>
            <person name="Rost B."/>
            <person name="Ruan Y."/>
            <person name="Salzberg S.L."/>
            <person name="Sandelin A."/>
            <person name="Schneider C."/>
            <person name="Schoenbach C."/>
            <person name="Sekiguchi K."/>
            <person name="Semple C.A."/>
            <person name="Seno S."/>
            <person name="Sessa L."/>
            <person name="Sheng Y."/>
            <person name="Shibata Y."/>
            <person name="Shimada H."/>
            <person name="Shimada K."/>
            <person name="Silva D."/>
            <person name="Sinclair B."/>
            <person name="Sperling S."/>
            <person name="Stupka E."/>
            <person name="Sugiura K."/>
            <person name="Sultana R."/>
            <person name="Takenaka Y."/>
            <person name="Taki K."/>
            <person name="Tammoja K."/>
            <person name="Tan S.L."/>
            <person name="Tang S."/>
            <person name="Taylor M.S."/>
            <person name="Tegner J."/>
            <person name="Teichmann S.A."/>
            <person name="Ueda H.R."/>
            <person name="van Nimwegen E."/>
            <person name="Verardo R."/>
            <person name="Wei C.L."/>
            <person name="Yagi K."/>
            <person name="Yamanishi H."/>
            <person name="Zabarovsky E."/>
            <person name="Zhu S."/>
            <person name="Zimmer A."/>
            <person name="Hide W."/>
            <person name="Bult C."/>
            <person name="Grimmond S.M."/>
            <person name="Teasdale R.D."/>
            <person name="Liu E.T."/>
            <person name="Brusic V."/>
            <person name="Quackenbush J."/>
            <person name="Wahlestedt C."/>
            <person name="Mattick J.S."/>
            <person name="Hume D.A."/>
            <person name="Kai C."/>
            <person name="Sasaki D."/>
            <person name="Tomaru Y."/>
            <person name="Fukuda S."/>
            <person name="Kanamori-Katayama M."/>
            <person name="Suzuki M."/>
            <person name="Aoki J."/>
            <person name="Arakawa T."/>
            <person name="Iida J."/>
            <person name="Imamura K."/>
            <person name="Itoh M."/>
            <person name="Kato T."/>
            <person name="Kawaji H."/>
            <person name="Kawagashira N."/>
            <person name="Kawashima T."/>
            <person name="Kojima M."/>
            <person name="Kondo S."/>
            <person name="Konno H."/>
            <person name="Nakano K."/>
            <person name="Ninomiya N."/>
            <person name="Nishio T."/>
            <person name="Okada M."/>
            <person name="Plessy C."/>
            <person name="Shibata K."/>
            <person name="Shiraki T."/>
            <person name="Suzuki S."/>
            <person name="Tagami M."/>
            <person name="Waki K."/>
            <person name="Watahiki A."/>
            <person name="Okamura-Oho Y."/>
            <person name="Suzuki H."/>
            <person name="Kawai J."/>
            <person name="Hayashizaki Y."/>
        </authorList>
    </citation>
    <scope>NUCLEOTIDE SEQUENCE [LARGE SCALE MRNA] (ALLELE R187X)</scope>
    <source>
        <strain>C57BL/6J</strain>
        <tissue>Head</tissue>
    </source>
</reference>
<reference key="3">
    <citation type="journal article" date="2004" name="Genome Res.">
        <title>The status, quality, and expansion of the NIH full-length cDNA project: the Mammalian Gene Collection (MGC).</title>
        <authorList>
            <consortium name="The MGC Project Team"/>
        </authorList>
    </citation>
    <scope>NUCLEOTIDE SEQUENCE [LARGE SCALE MRNA] (ISOFORM 1)</scope>
    <source>
        <strain>FVB/N</strain>
        <tissue>Colon</tissue>
    </source>
</reference>
<reference key="4">
    <citation type="journal article" date="2003" name="Science">
        <title>SCNM1, a putative RNA splicing factor that modifies disease severity in mice.</title>
        <authorList>
            <person name="Buchner D.A."/>
            <person name="Trudeau M."/>
            <person name="Meisler M.H."/>
        </authorList>
    </citation>
    <scope>IDENTIFICATION OF ISOFORM 3</scope>
    <scope>FUNCTION</scope>
    <scope>SUBCELLULAR LOCATION</scope>
    <scope>POLYMORPHISM</scope>
    <scope>DISEASE</scope>
</reference>
<reference key="5">
    <citation type="journal article" date="2009" name="Immunity">
        <title>The phagosomal proteome in interferon-gamma-activated macrophages.</title>
        <authorList>
            <person name="Trost M."/>
            <person name="English L."/>
            <person name="Lemieux S."/>
            <person name="Courcelles M."/>
            <person name="Desjardins M."/>
            <person name="Thibault P."/>
        </authorList>
    </citation>
    <scope>PHOSPHORYLATION [LARGE SCALE ANALYSIS] AT SER-182</scope>
    <scope>IDENTIFICATION BY MASS SPECTROMETRY [LARGE SCALE ANALYSIS]</scope>
</reference>
<protein>
    <recommendedName>
        <fullName>Sodium channel modifier 1</fullName>
    </recommendedName>
</protein>
<accession>Q8K136</accession>
<accession>Q9CXV5</accession>
<sequence>MSFKREGDDWSQLNVLKKRRVGDLLASYIPEDEALMLRDGRFACAICPHRPVLDTLAMLTAHRAGKKHLSSLKLFYGKKQTGKGTEQNPRQQNELKTESKTEAPLLTQTRIITQNALHRAPHYNSCCRRKHRPEAPAPSVSSPPLPTAEVQLQSAEISKEPEPRERSDAKESAALLASAPMSPTKRRVLNHYLTLRSSGWVPDGRGRWIKDENVEFDSDEEEPPDLPLD</sequence>
<organism>
    <name type="scientific">Mus musculus</name>
    <name type="common">Mouse</name>
    <dbReference type="NCBI Taxonomy" id="10090"/>
    <lineage>
        <taxon>Eukaryota</taxon>
        <taxon>Metazoa</taxon>
        <taxon>Chordata</taxon>
        <taxon>Craniata</taxon>
        <taxon>Vertebrata</taxon>
        <taxon>Euteleostomi</taxon>
        <taxon>Mammalia</taxon>
        <taxon>Eutheria</taxon>
        <taxon>Euarchontoglires</taxon>
        <taxon>Glires</taxon>
        <taxon>Rodentia</taxon>
        <taxon>Myomorpha</taxon>
        <taxon>Muroidea</taxon>
        <taxon>Muridae</taxon>
        <taxon>Murinae</taxon>
        <taxon>Mus</taxon>
        <taxon>Mus</taxon>
    </lineage>
</organism>
<dbReference type="EMBL" id="AK013948">
    <property type="protein sequence ID" value="BAB29077.1"/>
    <property type="molecule type" value="mRNA"/>
</dbReference>
<dbReference type="EMBL" id="BC028867">
    <property type="protein sequence ID" value="AAH28867.1"/>
    <property type="molecule type" value="mRNA"/>
</dbReference>
<dbReference type="RefSeq" id="NP_001157045.1">
    <property type="nucleotide sequence ID" value="NM_001163573.1"/>
</dbReference>
<dbReference type="RefSeq" id="NP_001396781.1">
    <molecule id="Q8K136-1"/>
    <property type="nucleotide sequence ID" value="NM_001409852.1"/>
</dbReference>
<dbReference type="RefSeq" id="NP_081289.2">
    <property type="nucleotide sequence ID" value="NM_027013.2"/>
</dbReference>
<dbReference type="SMR" id="Q8K136"/>
<dbReference type="BioGRID" id="213325">
    <property type="interactions" value="1"/>
</dbReference>
<dbReference type="FunCoup" id="Q8K136">
    <property type="interactions" value="2551"/>
</dbReference>
<dbReference type="IntAct" id="Q8K136">
    <property type="interactions" value="1"/>
</dbReference>
<dbReference type="STRING" id="10090.ENSMUSP00000134337"/>
<dbReference type="GlyGen" id="Q8K136">
    <property type="glycosylation" value="2 sites, 1 O-linked glycan (2 sites)"/>
</dbReference>
<dbReference type="iPTMnet" id="Q8K136"/>
<dbReference type="PhosphoSitePlus" id="Q8K136"/>
<dbReference type="jPOST" id="Q8K136"/>
<dbReference type="PaxDb" id="10090-ENSMUSP00000134337"/>
<dbReference type="PeptideAtlas" id="Q8K136"/>
<dbReference type="ProteomicsDB" id="253422">
    <molecule id="Q8K136-1"/>
</dbReference>
<dbReference type="ProteomicsDB" id="253423">
    <molecule id="Q8K136-3"/>
</dbReference>
<dbReference type="Antibodypedia" id="34055">
    <property type="antibodies" value="98 antibodies from 27 providers"/>
</dbReference>
<dbReference type="DNASU" id="69269"/>
<dbReference type="Ensembl" id="ENSMUST00000173462.3">
    <molecule id="Q8K136-3"/>
    <property type="protein sequence ID" value="ENSMUSP00000133769.2"/>
    <property type="gene ID" value="ENSMUSG00000092607.10"/>
</dbReference>
<dbReference type="GeneID" id="69269"/>
<dbReference type="UCSC" id="uc012ctq.1">
    <molecule id="Q8K136-1"/>
    <property type="organism name" value="mouse"/>
</dbReference>
<dbReference type="UCSC" id="uc012ctr.1">
    <molecule id="Q8K136-3"/>
    <property type="organism name" value="mouse"/>
</dbReference>
<dbReference type="AGR" id="MGI:1341284"/>
<dbReference type="MGI" id="MGI:1341284">
    <property type="gene designation" value="Scnm1"/>
</dbReference>
<dbReference type="VEuPathDB" id="HostDB:ENSMUSG00000092607"/>
<dbReference type="eggNOG" id="ENOG502QWNV">
    <property type="taxonomic scope" value="Eukaryota"/>
</dbReference>
<dbReference type="GeneTree" id="ENSGT00390000010811"/>
<dbReference type="HOGENOM" id="CLU_059812_0_0_1"/>
<dbReference type="InParanoid" id="Q8K136"/>
<dbReference type="OMA" id="RSTEMQW"/>
<dbReference type="BioGRID-ORCS" id="69269">
    <property type="hits" value="3 hits in 78 CRISPR screens"/>
</dbReference>
<dbReference type="ChiTaRS" id="Scnm1">
    <property type="organism name" value="mouse"/>
</dbReference>
<dbReference type="PRO" id="PR:Q8K136"/>
<dbReference type="Proteomes" id="UP000000589">
    <property type="component" value="Chromosome 3"/>
</dbReference>
<dbReference type="RNAct" id="Q8K136">
    <property type="molecule type" value="protein"/>
</dbReference>
<dbReference type="Bgee" id="ENSMUSG00000092607">
    <property type="expression patterns" value="Expressed in retinal neural layer and 252 other cell types or tissues"/>
</dbReference>
<dbReference type="ExpressionAtlas" id="Q8K136">
    <property type="expression patterns" value="baseline and differential"/>
</dbReference>
<dbReference type="GO" id="GO:0016607">
    <property type="term" value="C:nuclear speck"/>
    <property type="evidence" value="ECO:0000314"/>
    <property type="project" value="UniProtKB"/>
</dbReference>
<dbReference type="GO" id="GO:0005634">
    <property type="term" value="C:nucleus"/>
    <property type="evidence" value="ECO:0000314"/>
    <property type="project" value="MGI"/>
</dbReference>
<dbReference type="GO" id="GO:0005681">
    <property type="term" value="C:spliceosomal complex"/>
    <property type="evidence" value="ECO:0007669"/>
    <property type="project" value="UniProtKB-KW"/>
</dbReference>
<dbReference type="GO" id="GO:0019899">
    <property type="term" value="F:enzyme binding"/>
    <property type="evidence" value="ECO:0007669"/>
    <property type="project" value="Ensembl"/>
</dbReference>
<dbReference type="GO" id="GO:0008270">
    <property type="term" value="F:zinc ion binding"/>
    <property type="evidence" value="ECO:0007669"/>
    <property type="project" value="UniProtKB-KW"/>
</dbReference>
<dbReference type="GO" id="GO:0000380">
    <property type="term" value="P:alternative mRNA splicing, via spliceosome"/>
    <property type="evidence" value="ECO:0000315"/>
    <property type="project" value="UniProtKB"/>
</dbReference>
<dbReference type="GO" id="GO:0008380">
    <property type="term" value="P:RNA splicing"/>
    <property type="evidence" value="ECO:0000315"/>
    <property type="project" value="MGI"/>
</dbReference>
<dbReference type="InterPro" id="IPR033570">
    <property type="entry name" value="SCNM1"/>
</dbReference>
<dbReference type="InterPro" id="IPR031625">
    <property type="entry name" value="SCNM1_acidic"/>
</dbReference>
<dbReference type="InterPro" id="IPR031622">
    <property type="entry name" value="Znf-SCNM1"/>
</dbReference>
<dbReference type="PANTHER" id="PTHR32297">
    <property type="entry name" value="SODIUM CHANNEL MODIFIER 1"/>
    <property type="match status" value="1"/>
</dbReference>
<dbReference type="PANTHER" id="PTHR32297:SF1">
    <property type="entry name" value="SODIUM CHANNEL MODIFIER 1"/>
    <property type="match status" value="1"/>
</dbReference>
<dbReference type="Pfam" id="PF15805">
    <property type="entry name" value="SCNM1_acidic"/>
    <property type="match status" value="1"/>
</dbReference>
<dbReference type="Pfam" id="PF15803">
    <property type="entry name" value="zf-SCNM1"/>
    <property type="match status" value="1"/>
</dbReference>
<comment type="function">
    <text evidence="1 4 5">As a component of the minor spliceosome, involved in the splicing of U12-type introns in pre-mRNAs (PubMed:12920299, PubMed:17656373). Plays a role in the regulation of primary cilia length and Hedgehog signaling (By similarity).</text>
</comment>
<comment type="subunit">
    <text evidence="1 5">Component of the minor spliceosome (PubMed:17656373). Within this complex, interacts with RNF113A, as well as with SF3B1/SF3b155, SF3B2/SF3b145, SF3B3/SF3b130 and CDC5L (By similarity). May interact with LUC7L2 and SNRNP70 (PubMed:17656373).</text>
</comment>
<comment type="subcellular location">
    <subcellularLocation>
        <location evidence="5">Nucleus</location>
        <location evidence="5">Nucleoplasm</location>
    </subcellularLocation>
    <subcellularLocation>
        <location evidence="5">Nucleus speckle</location>
    </subcellularLocation>
    <text evidence="5">Colocalizes with LUC7L2 and SNRNP70 in nuclear speckles.</text>
</comment>
<comment type="alternative products">
    <event type="alternative splicing"/>
    <isoform>
        <id>Q8K136-1</id>
        <name>1</name>
        <sequence type="displayed"/>
    </isoform>
    <isoform>
        <id>Q8K136-3</id>
        <name>3</name>
        <sequence type="described" ref="VSP_021490"/>
    </isoform>
</comment>
<comment type="polymorphism">
    <text evidence="4">Strains C57BL/6J, C57BR/cdJ, C57L/J, C57BL/10J and C58/J carry the R187X allele, in which a polymorphism generates a premature stop codon, leading to either a truncated protein or an alternatively spliced isoform 3.</text>
</comment>
<comment type="disease">
    <text evidence="4">Allele R187X is a disease susceptibility variant, which modifies the severity of the disease jolting mutant (medjo) caused by defects in Scn8a. It reduces the abundance of correctly spliced Scn8a transcripts below the threshold for survival thereby converting a chronic movement disorder into a lethal neurological disease.</text>
</comment>
<comment type="miscellaneous">
    <molecule>Isoform 3</molecule>
    <text evidence="6">Due to disruption of a consensus exonic splicing enhancer in allele R187X, leading to exon 6 skipping. Only found in strains C57BL/6J, C57BR/cdJ, C57L/J, C57BL/10J and C58/J.</text>
</comment>